<feature type="chain" id="PRO_1000076917" description="Lipoprotein signal peptidase">
    <location>
        <begin position="1"/>
        <end position="165"/>
    </location>
</feature>
<feature type="transmembrane region" description="Helical" evidence="1">
    <location>
        <begin position="10"/>
        <end position="30"/>
    </location>
</feature>
<feature type="transmembrane region" description="Helical" evidence="1">
    <location>
        <begin position="42"/>
        <end position="62"/>
    </location>
</feature>
<feature type="transmembrane region" description="Helical" evidence="1">
    <location>
        <begin position="71"/>
        <end position="91"/>
    </location>
</feature>
<feature type="transmembrane region" description="Helical" evidence="1">
    <location>
        <begin position="105"/>
        <end position="125"/>
    </location>
</feature>
<feature type="transmembrane region" description="Helical" evidence="1">
    <location>
        <begin position="133"/>
        <end position="153"/>
    </location>
</feature>
<feature type="active site" evidence="1">
    <location>
        <position position="123"/>
    </location>
</feature>
<feature type="active site" evidence="1">
    <location>
        <position position="141"/>
    </location>
</feature>
<protein>
    <recommendedName>
        <fullName evidence="1">Lipoprotein signal peptidase</fullName>
        <ecNumber evidence="1">3.4.23.36</ecNumber>
    </recommendedName>
    <alternativeName>
        <fullName evidence="1">Prolipoprotein signal peptidase</fullName>
    </alternativeName>
    <alternativeName>
        <fullName evidence="1">Signal peptidase II</fullName>
        <shortName evidence="1">SPase II</shortName>
    </alternativeName>
</protein>
<reference key="1">
    <citation type="journal article" date="2005" name="Genome Res.">
        <title>Genome sequence of Blochmannia pennsylvanicus indicates parallel evolutionary trends among bacterial mutualists of insects.</title>
        <authorList>
            <person name="Degnan P.H."/>
            <person name="Lazarus A.B."/>
            <person name="Wernegreen J.J."/>
        </authorList>
    </citation>
    <scope>NUCLEOTIDE SEQUENCE [LARGE SCALE GENOMIC DNA]</scope>
    <source>
        <strain>BPEN</strain>
    </source>
</reference>
<gene>
    <name evidence="1" type="primary">lspA</name>
    <name type="ordered locus">BPEN_123</name>
</gene>
<organism>
    <name type="scientific">Blochmanniella pennsylvanica (strain BPEN)</name>
    <dbReference type="NCBI Taxonomy" id="291272"/>
    <lineage>
        <taxon>Bacteria</taxon>
        <taxon>Pseudomonadati</taxon>
        <taxon>Pseudomonadota</taxon>
        <taxon>Gammaproteobacteria</taxon>
        <taxon>Enterobacterales</taxon>
        <taxon>Enterobacteriaceae</taxon>
        <taxon>ant endosymbionts</taxon>
        <taxon>Candidatus Blochmanniella</taxon>
    </lineage>
</organism>
<proteinExistence type="inferred from homology"/>
<accession>Q493S2</accession>
<evidence type="ECO:0000255" key="1">
    <source>
        <dbReference type="HAMAP-Rule" id="MF_00161"/>
    </source>
</evidence>
<keyword id="KW-0064">Aspartyl protease</keyword>
<keyword id="KW-0997">Cell inner membrane</keyword>
<keyword id="KW-1003">Cell membrane</keyword>
<keyword id="KW-0378">Hydrolase</keyword>
<keyword id="KW-0472">Membrane</keyword>
<keyword id="KW-0645">Protease</keyword>
<keyword id="KW-1185">Reference proteome</keyword>
<keyword id="KW-0812">Transmembrane</keyword>
<keyword id="KW-1133">Transmembrane helix</keyword>
<comment type="function">
    <text evidence="1">This protein specifically catalyzes the removal of signal peptides from prolipoproteins.</text>
</comment>
<comment type="catalytic activity">
    <reaction evidence="1">
        <text>Release of signal peptides from bacterial membrane prolipoproteins. Hydrolyzes -Xaa-Yaa-Zaa-|-(S,diacylglyceryl)Cys-, in which Xaa is hydrophobic (preferably Leu), and Yaa (Ala or Ser) and Zaa (Gly or Ala) have small, neutral side chains.</text>
        <dbReference type="EC" id="3.4.23.36"/>
    </reaction>
</comment>
<comment type="pathway">
    <text evidence="1">Protein modification; lipoprotein biosynthesis (signal peptide cleavage).</text>
</comment>
<comment type="subcellular location">
    <subcellularLocation>
        <location evidence="1">Cell inner membrane</location>
        <topology evidence="1">Multi-pass membrane protein</topology>
    </subcellularLocation>
</comment>
<comment type="similarity">
    <text evidence="1">Belongs to the peptidase A8 family.</text>
</comment>
<sequence>MNNKYNYKNLKWLWLSILIMLLDIGTKYWVKTHFWIGEVLSVLPGINCYYVCNPGLAFGLFTNASLYYRWLFVWIITLVIVAFIIALYKLIERPKCYSISYSMVIGGALGNLLDRILYGAVVDFIDVHIKNWHWPTFNVADIAICIGITIVTIRFYYDFIKNNLY</sequence>
<dbReference type="EC" id="3.4.23.36" evidence="1"/>
<dbReference type="EMBL" id="CP000016">
    <property type="protein sequence ID" value="AAZ40763.1"/>
    <property type="molecule type" value="Genomic_DNA"/>
</dbReference>
<dbReference type="RefSeq" id="WP_011282670.1">
    <property type="nucleotide sequence ID" value="NC_007292.1"/>
</dbReference>
<dbReference type="SMR" id="Q493S2"/>
<dbReference type="STRING" id="291272.BPEN_123"/>
<dbReference type="KEGG" id="bpn:BPEN_123"/>
<dbReference type="eggNOG" id="COG0597">
    <property type="taxonomic scope" value="Bacteria"/>
</dbReference>
<dbReference type="HOGENOM" id="CLU_083252_4_0_6"/>
<dbReference type="OrthoDB" id="9810259at2"/>
<dbReference type="UniPathway" id="UPA00665"/>
<dbReference type="Proteomes" id="UP000007794">
    <property type="component" value="Chromosome"/>
</dbReference>
<dbReference type="GO" id="GO:0005886">
    <property type="term" value="C:plasma membrane"/>
    <property type="evidence" value="ECO:0007669"/>
    <property type="project" value="UniProtKB-SubCell"/>
</dbReference>
<dbReference type="GO" id="GO:0004190">
    <property type="term" value="F:aspartic-type endopeptidase activity"/>
    <property type="evidence" value="ECO:0007669"/>
    <property type="project" value="UniProtKB-UniRule"/>
</dbReference>
<dbReference type="GO" id="GO:0006508">
    <property type="term" value="P:proteolysis"/>
    <property type="evidence" value="ECO:0007669"/>
    <property type="project" value="UniProtKB-KW"/>
</dbReference>
<dbReference type="HAMAP" id="MF_00161">
    <property type="entry name" value="LspA"/>
    <property type="match status" value="1"/>
</dbReference>
<dbReference type="InterPro" id="IPR001872">
    <property type="entry name" value="Peptidase_A8"/>
</dbReference>
<dbReference type="NCBIfam" id="TIGR00077">
    <property type="entry name" value="lspA"/>
    <property type="match status" value="1"/>
</dbReference>
<dbReference type="PANTHER" id="PTHR33695">
    <property type="entry name" value="LIPOPROTEIN SIGNAL PEPTIDASE"/>
    <property type="match status" value="1"/>
</dbReference>
<dbReference type="PANTHER" id="PTHR33695:SF1">
    <property type="entry name" value="LIPOPROTEIN SIGNAL PEPTIDASE"/>
    <property type="match status" value="1"/>
</dbReference>
<dbReference type="Pfam" id="PF01252">
    <property type="entry name" value="Peptidase_A8"/>
    <property type="match status" value="1"/>
</dbReference>
<dbReference type="PRINTS" id="PR00781">
    <property type="entry name" value="LIPOSIGPTASE"/>
</dbReference>
<dbReference type="PROSITE" id="PS00855">
    <property type="entry name" value="SPASE_II"/>
    <property type="match status" value="1"/>
</dbReference>
<name>LSPA_BLOPB</name>